<name>GBDR_PSEAE</name>
<organism>
    <name type="scientific">Pseudomonas aeruginosa (strain ATCC 15692 / DSM 22644 / CIP 104116 / JCM 14847 / LMG 12228 / 1C / PRS 101 / PAO1)</name>
    <dbReference type="NCBI Taxonomy" id="208964"/>
    <lineage>
        <taxon>Bacteria</taxon>
        <taxon>Pseudomonadati</taxon>
        <taxon>Pseudomonadota</taxon>
        <taxon>Gammaproteobacteria</taxon>
        <taxon>Pseudomonadales</taxon>
        <taxon>Pseudomonadaceae</taxon>
        <taxon>Pseudomonas</taxon>
    </lineage>
</organism>
<proteinExistence type="evidence at protein level"/>
<evidence type="ECO:0000255" key="1">
    <source>
        <dbReference type="PROSITE-ProRule" id="PRU00593"/>
    </source>
</evidence>
<evidence type="ECO:0000269" key="2">
    <source>
    </source>
</evidence>
<evidence type="ECO:0000269" key="3">
    <source>
    </source>
</evidence>
<evidence type="ECO:0000269" key="4">
    <source>
    </source>
</evidence>
<evidence type="ECO:0000269" key="5">
    <source>
    </source>
</evidence>
<evidence type="ECO:0000303" key="6">
    <source>
    </source>
</evidence>
<evidence type="ECO:0000305" key="7"/>
<evidence type="ECO:0000312" key="8">
    <source>
        <dbReference type="EMBL" id="AAG08765.1"/>
    </source>
</evidence>
<reference key="1">
    <citation type="journal article" date="2000" name="Nature">
        <title>Complete genome sequence of Pseudomonas aeruginosa PAO1, an opportunistic pathogen.</title>
        <authorList>
            <person name="Stover C.K."/>
            <person name="Pham X.-Q.T."/>
            <person name="Erwin A.L."/>
            <person name="Mizoguchi S.D."/>
            <person name="Warrener P."/>
            <person name="Hickey M.J."/>
            <person name="Brinkman F.S.L."/>
            <person name="Hufnagle W.O."/>
            <person name="Kowalik D.J."/>
            <person name="Lagrou M."/>
            <person name="Garber R.L."/>
            <person name="Goltry L."/>
            <person name="Tolentino E."/>
            <person name="Westbrock-Wadman S."/>
            <person name="Yuan Y."/>
            <person name="Brody L.L."/>
            <person name="Coulter S.N."/>
            <person name="Folger K.R."/>
            <person name="Kas A."/>
            <person name="Larbig K."/>
            <person name="Lim R.M."/>
            <person name="Smith K.A."/>
            <person name="Spencer D.H."/>
            <person name="Wong G.K.-S."/>
            <person name="Wu Z."/>
            <person name="Paulsen I.T."/>
            <person name="Reizer J."/>
            <person name="Saier M.H. Jr."/>
            <person name="Hancock R.E.W."/>
            <person name="Lory S."/>
            <person name="Olson M.V."/>
        </authorList>
    </citation>
    <scope>NUCLEOTIDE SEQUENCE [LARGE SCALE GENOMIC DNA]</scope>
    <source>
        <strain>ATCC 15692 / DSM 22644 / CIP 104116 / JCM 14847 / LMG 12228 / 1C / PRS 101 / PAO1</strain>
    </source>
</reference>
<reference key="2">
    <citation type="journal article" date="2008" name="J. Bacteriol.">
        <title>Identification of two gene clusters and a transcriptional regulator required for Pseudomonas aeruginosa glycine betaine catabolism.</title>
        <authorList>
            <person name="Wargo M.J."/>
            <person name="Szwergold B.S."/>
            <person name="Hogan D.A."/>
        </authorList>
    </citation>
    <scope>FUNCTION</scope>
    <scope>DISRUPTION PHENOTYPE</scope>
    <source>
        <strain>ATCC 15692 / DSM 22644 / CIP 104116 / JCM 14847 / LMG 12228 / 1C / PRS 101 / PAO1</strain>
    </source>
</reference>
<reference key="3">
    <citation type="journal article" date="2009" name="Infect. Immun.">
        <title>GbdR regulates Pseudomonas aeruginosa plcH and pchP transcription in response to choline catabolites.</title>
        <authorList>
            <person name="Wargo M.J."/>
            <person name="Ho T.C."/>
            <person name="Gross M.J."/>
            <person name="Whittaker L.A."/>
            <person name="Hogan D.A."/>
        </authorList>
    </citation>
    <scope>FUNCTION</scope>
    <scope>DNA BINDING</scope>
    <scope>DISRUPTION PHENOTYPE</scope>
    <source>
        <strain>ATCC 15692 / DSM 22644 / CIP 104116 / JCM 14847 / LMG 12228 / 1C / PRS 101 / PAO1</strain>
    </source>
</reference>
<reference key="4">
    <citation type="journal article" date="2014" name="J. Bacteriol.">
        <title>Characterization of the GbdR regulon in Pseudomonas aeruginosa.</title>
        <authorList>
            <person name="Hampel K.J."/>
            <person name="LaBauve A.E."/>
            <person name="Meadows J.A."/>
            <person name="Fitzsimmons L.F."/>
            <person name="Nock A.M."/>
            <person name="Wargo M.J."/>
        </authorList>
    </citation>
    <scope>FUNCTION</scope>
    <scope>DNA-BINDING</scope>
    <source>
        <strain>ATCC 15692 / DSM 22644 / CIP 104116 / JCM 14847 / LMG 12228 / 1C / PRS 101 / PAO1</strain>
    </source>
</reference>
<reference key="5">
    <citation type="journal article" date="2017" name="Microbiology">
        <title>Pseudomonas aeruginosa gbdR gene is transcribed from a sigma54-dependent promoter under the control of NtrC/CbrB, IHF and BetI.</title>
        <authorList>
            <person name="Sanchez D.G."/>
            <person name="Primo E.D."/>
            <person name="Damiani M.T."/>
            <person name="Lisa A.T."/>
        </authorList>
    </citation>
    <scope>INDUCTION</scope>
    <source>
        <strain>ATCC 15692 / DSM 22644 / CIP 104116 / JCM 14847 / LMG 12228 / 1C / PRS 101 / PAO1</strain>
    </source>
</reference>
<feature type="chain" id="PRO_0000453827" description="HTH-type transcriptional regulator GbdR">
    <location>
        <begin position="1"/>
        <end position="367"/>
    </location>
</feature>
<feature type="domain" description="HTH araC/xylS-type" evidence="1">
    <location>
        <begin position="227"/>
        <end position="325"/>
    </location>
</feature>
<feature type="DNA-binding region" description="H-T-H motif" evidence="1">
    <location>
        <begin position="244"/>
        <end position="265"/>
    </location>
</feature>
<feature type="DNA-binding region" description="H-T-H motif" evidence="1">
    <location>
        <begin position="292"/>
        <end position="315"/>
    </location>
</feature>
<gene>
    <name evidence="6" type="primary">gbdR</name>
    <name evidence="8" type="ordered locus">PA5380</name>
</gene>
<protein>
    <recommendedName>
        <fullName evidence="7">HTH-type transcriptional regulator GbdR</fullName>
    </recommendedName>
    <alternativeName>
        <fullName evidence="6">Glycine betaine/dimethylglycine responsive regulator</fullName>
    </alternativeName>
</protein>
<dbReference type="EMBL" id="AE004091">
    <property type="protein sequence ID" value="AAG08765.1"/>
    <property type="molecule type" value="Genomic_DNA"/>
</dbReference>
<dbReference type="PIR" id="E82974">
    <property type="entry name" value="E82974"/>
</dbReference>
<dbReference type="RefSeq" id="NP_254067.1">
    <property type="nucleotide sequence ID" value="NC_002516.2"/>
</dbReference>
<dbReference type="RefSeq" id="WP_003096699.1">
    <property type="nucleotide sequence ID" value="NZ_QZGE01000031.1"/>
</dbReference>
<dbReference type="SMR" id="Q9HTI4"/>
<dbReference type="FunCoup" id="Q9HTI4">
    <property type="interactions" value="27"/>
</dbReference>
<dbReference type="STRING" id="208964.PA5380"/>
<dbReference type="PaxDb" id="208964-PA5380"/>
<dbReference type="DNASU" id="881137"/>
<dbReference type="GeneID" id="881137"/>
<dbReference type="KEGG" id="pae:PA5380"/>
<dbReference type="PATRIC" id="fig|208964.12.peg.5639"/>
<dbReference type="PseudoCAP" id="PA5380"/>
<dbReference type="HOGENOM" id="CLU_000445_59_0_6"/>
<dbReference type="InParanoid" id="Q9HTI4"/>
<dbReference type="OrthoDB" id="9803764at2"/>
<dbReference type="PhylomeDB" id="Q9HTI4"/>
<dbReference type="BioCyc" id="PAER208964:G1FZ6-5507-MONOMER"/>
<dbReference type="Proteomes" id="UP000002438">
    <property type="component" value="Chromosome"/>
</dbReference>
<dbReference type="GO" id="GO:0032993">
    <property type="term" value="C:protein-DNA complex"/>
    <property type="evidence" value="ECO:0000315"/>
    <property type="project" value="CollecTF"/>
</dbReference>
<dbReference type="GO" id="GO:0001216">
    <property type="term" value="F:DNA-binding transcription activator activity"/>
    <property type="evidence" value="ECO:0000315"/>
    <property type="project" value="CollecTF"/>
</dbReference>
<dbReference type="GO" id="GO:0000976">
    <property type="term" value="F:transcription cis-regulatory region binding"/>
    <property type="evidence" value="ECO:0000315"/>
    <property type="project" value="CollecTF"/>
</dbReference>
<dbReference type="GO" id="GO:0031457">
    <property type="term" value="P:glycine betaine catabolic process"/>
    <property type="evidence" value="ECO:0000315"/>
    <property type="project" value="PseudoCAP"/>
</dbReference>
<dbReference type="GO" id="GO:0045764">
    <property type="term" value="P:positive regulation of amino acid metabolic process"/>
    <property type="evidence" value="ECO:0000315"/>
    <property type="project" value="PseudoCAP"/>
</dbReference>
<dbReference type="GO" id="GO:0009896">
    <property type="term" value="P:positive regulation of catabolic process"/>
    <property type="evidence" value="ECO:0000315"/>
    <property type="project" value="PseudoCAP"/>
</dbReference>
<dbReference type="GO" id="GO:0045893">
    <property type="term" value="P:positive regulation of DNA-templated transcription"/>
    <property type="evidence" value="ECO:0000270"/>
    <property type="project" value="CollecTF"/>
</dbReference>
<dbReference type="GO" id="GO:0006355">
    <property type="term" value="P:regulation of DNA-templated transcription"/>
    <property type="evidence" value="ECO:0000314"/>
    <property type="project" value="PseudoCAP"/>
</dbReference>
<dbReference type="CDD" id="cd03136">
    <property type="entry name" value="GATase1_AraC_ArgR_like"/>
    <property type="match status" value="1"/>
</dbReference>
<dbReference type="FunFam" id="3.40.50.880:FF:000061">
    <property type="entry name" value="AraC family transcriptional regulator"/>
    <property type="match status" value="1"/>
</dbReference>
<dbReference type="FunFam" id="1.10.10.60:FF:000090">
    <property type="entry name" value="Transcriptional regulator ArgR, AraC family"/>
    <property type="match status" value="1"/>
</dbReference>
<dbReference type="Gene3D" id="3.40.50.880">
    <property type="match status" value="1"/>
</dbReference>
<dbReference type="Gene3D" id="1.10.10.60">
    <property type="entry name" value="Homeodomain-like"/>
    <property type="match status" value="1"/>
</dbReference>
<dbReference type="InterPro" id="IPR029062">
    <property type="entry name" value="Class_I_gatase-like"/>
</dbReference>
<dbReference type="InterPro" id="IPR002818">
    <property type="entry name" value="DJ-1/PfpI"/>
</dbReference>
<dbReference type="InterPro" id="IPR009057">
    <property type="entry name" value="Homeodomain-like_sf"/>
</dbReference>
<dbReference type="InterPro" id="IPR018060">
    <property type="entry name" value="HTH_AraC"/>
</dbReference>
<dbReference type="InterPro" id="IPR018062">
    <property type="entry name" value="HTH_AraC-typ_CS"/>
</dbReference>
<dbReference type="InterPro" id="IPR052158">
    <property type="entry name" value="INH-QAR"/>
</dbReference>
<dbReference type="PANTHER" id="PTHR43130">
    <property type="entry name" value="ARAC-FAMILY TRANSCRIPTIONAL REGULATOR"/>
    <property type="match status" value="1"/>
</dbReference>
<dbReference type="PANTHER" id="PTHR43130:SF3">
    <property type="entry name" value="HTH-TYPE TRANSCRIPTIONAL REGULATOR RV1931C"/>
    <property type="match status" value="1"/>
</dbReference>
<dbReference type="Pfam" id="PF01965">
    <property type="entry name" value="DJ-1_PfpI"/>
    <property type="match status" value="1"/>
</dbReference>
<dbReference type="Pfam" id="PF12833">
    <property type="entry name" value="HTH_18"/>
    <property type="match status" value="1"/>
</dbReference>
<dbReference type="SMART" id="SM00342">
    <property type="entry name" value="HTH_ARAC"/>
    <property type="match status" value="1"/>
</dbReference>
<dbReference type="SUPFAM" id="SSF52317">
    <property type="entry name" value="Class I glutamine amidotransferase-like"/>
    <property type="match status" value="1"/>
</dbReference>
<dbReference type="SUPFAM" id="SSF46689">
    <property type="entry name" value="Homeodomain-like"/>
    <property type="match status" value="2"/>
</dbReference>
<dbReference type="PROSITE" id="PS00041">
    <property type="entry name" value="HTH_ARAC_FAMILY_1"/>
    <property type="match status" value="1"/>
</dbReference>
<dbReference type="PROSITE" id="PS01124">
    <property type="entry name" value="HTH_ARAC_FAMILY_2"/>
    <property type="match status" value="1"/>
</dbReference>
<accession>Q9HTI4</accession>
<keyword id="KW-0010">Activator</keyword>
<keyword id="KW-0238">DNA-binding</keyword>
<keyword id="KW-1185">Reference proteome</keyword>
<keyword id="KW-0804">Transcription</keyword>
<keyword id="KW-0805">Transcription regulation</keyword>
<sequence>MTTYAPGVPPQNRNPQSIGFLLLDNFTLISLASAVEPLRMANQLSGRELYRWHTLSLDGRQVWASDGLQITPDAGTDNAPAVDCVIVCGGVGIQRSVTREHVTFLQAQARQGRRLGAVCTGSWALARAGLLDGYDCSVHWECLAAMQEAFPRVAMSTRLFSIDRNRFTSSGGTAPMDMMLHLIGREHGRELSAAISEMFIYERIRNEQDHQRVPLKHMLGTNQPKLQEIVALMEANLEEPIDLDELAVYVNVSRRQLERLFQKYLHCSPSRYYLKLRLIRARQLLKQTSMSIIEVASVCGFVSTPHFSKCYREYFGIPPRDERQGQPLGQPVVLMPIPQDLALMPNSSALSALSQAQGESTFASVRI</sequence>
<comment type="function">
    <text evidence="2 3 4">Specific regulator of choline metabolism, which activates transcription of at least 25 genes from 11 promoters in response to choline metabolites (PubMed:24097953). Required for the induction of plcH, encoding the phospholipase C, and pchP, encoding the phosphorylcholine phosphatase, in response to glycine betaine (GB) and dimethylglycine (DMG) (PubMed:19103776). Also controls the expression of gbcAB and dgcAB, which are required for GB and DMG degradation, respectively, in response to both GB and DMG (PubMed:17951379). The GbdR regulon also includes genes encoding sarcosine, glycine and serine catabolic enzymes, the BetX and CbcXWV quaternary amine transport proteins and the acetylcholine esterase gene, choE (PubMed:24097953). Acts by binding directly to the promoter region of the genes (PubMed:19103776, PubMed:24097953). May play an important role during P.aeruginosa interactions with eukaryotes (PubMed:17951379). Is critical for induction of plcH and pchP in response to bovine surfactant and mouse bronchoalveolar lavage fluid (BALF) (PubMed:19103776).</text>
</comment>
<comment type="induction">
    <text evidence="5">The highest level of transcriptional activity is reached in the presence of choline. Regulated at the transcriptional level by a sigma-54-dependent promoter. Transcription can be activated by NtrC in the absence of a preferential nitrogen source, by CbrB in the absence of a preferential carbon source, and by the integration host factor (IHF), by favouring DNA bending. Negatively regulated by BetI in the absence of choline.</text>
</comment>
<comment type="disruption phenotype">
    <text evidence="2 3">Mutant is unable to grow on choline, GB and DMG as sole carbon or nitrogen sources (PubMed:17951379). Mutants that lack this gene are unable to induce plcH and pchP in media containing GB or choline and in phosphatidylcholine-rich environments, such as lung surfactant or mouse lung lavage fluid (PubMed:19103776).</text>
</comment>